<comment type="function">
    <text evidence="5">GABA, an inhibitory neurotransmitter, mediates neuronal inhibition by binding to the GABA receptor and opening an integral chloride channel.</text>
</comment>
<comment type="subunit">
    <text evidence="5">Homomultimer.</text>
</comment>
<comment type="subcellular location">
    <subcellularLocation>
        <location evidence="1">Postsynaptic cell membrane</location>
        <topology evidence="1">Multi-pass membrane protein</topology>
    </subcellularLocation>
    <subcellularLocation>
        <location evidence="1">Cell membrane</location>
        <topology evidence="1">Multi-pass membrane protein</topology>
    </subcellularLocation>
</comment>
<comment type="miscellaneous">
    <text evidence="6">Flies carrying the Rdl-S mutation are resistant to dieldrin.</text>
</comment>
<comment type="similarity">
    <text evidence="8">Belongs to the ligand-gated ion channel (TC 1.A.9) family. Gamma-aminobutyric acid receptor (TC 1.A.9.5) subfamily.</text>
</comment>
<name>GBRB_MUSDO</name>
<feature type="signal peptide" evidence="3">
    <location>
        <begin position="1"/>
        <end position="29"/>
    </location>
</feature>
<feature type="chain" id="PRO_0000326433" description="Gamma-aminobutyric acid receptor subunit beta" evidence="3">
    <location>
        <begin position="30"/>
        <end position="576"/>
    </location>
</feature>
<feature type="topological domain" description="Extracellular" evidence="3">
    <location>
        <begin position="30"/>
        <end position="268"/>
    </location>
</feature>
<feature type="transmembrane region" description="Helical" evidence="3">
    <location>
        <begin position="269"/>
        <end position="289"/>
    </location>
</feature>
<feature type="transmembrane region" description="Helical" evidence="3">
    <location>
        <begin position="298"/>
        <end position="320"/>
    </location>
</feature>
<feature type="transmembrane region" description="Helical" evidence="3">
    <location>
        <begin position="330"/>
        <end position="350"/>
    </location>
</feature>
<feature type="topological domain" description="Cytoplasmic" evidence="3">
    <location>
        <begin position="351"/>
        <end position="540"/>
    </location>
</feature>
<feature type="transmembrane region" description="Helical" evidence="3">
    <location>
        <begin position="541"/>
        <end position="561"/>
    </location>
</feature>
<feature type="region of interest" description="Disordered" evidence="4">
    <location>
        <begin position="372"/>
        <end position="418"/>
    </location>
</feature>
<feature type="region of interest" description="Disordered" evidence="4">
    <location>
        <begin position="452"/>
        <end position="507"/>
    </location>
</feature>
<feature type="compositionally biased region" description="Basic residues" evidence="4">
    <location>
        <begin position="398"/>
        <end position="412"/>
    </location>
</feature>
<feature type="compositionally biased region" description="Pro residues" evidence="4">
    <location>
        <begin position="475"/>
        <end position="490"/>
    </location>
</feature>
<feature type="compositionally biased region" description="Gly residues" evidence="4">
    <location>
        <begin position="491"/>
        <end position="501"/>
    </location>
</feature>
<feature type="glycosylation site" description="N-linked (GlcNAc...) asparagine" evidence="3">
    <location>
        <position position="56"/>
    </location>
</feature>
<feature type="glycosylation site" description="N-linked (GlcNAc...) asparagine" evidence="3">
    <location>
        <position position="251"/>
    </location>
</feature>
<feature type="disulfide bond" evidence="2">
    <location>
        <begin position="183"/>
        <end position="197"/>
    </location>
</feature>
<feature type="sequence conflict" description="In Ref. 2; AAC23602." evidence="8" ref="2">
    <original>R</original>
    <variation>G</variation>
    <location>
        <position position="120"/>
    </location>
</feature>
<feature type="sequence conflict" description="In Ref. 2; AAC23602." evidence="8" ref="2">
    <original>FFVNEKQSYFH</original>
    <variation>S</variation>
    <location>
        <begin position="144"/>
        <end position="154"/>
    </location>
</feature>
<feature type="sequence conflict" description="In Ref. 2; AAC23602." evidence="8" ref="2">
    <original>S</original>
    <variation>G</variation>
    <location>
        <position position="159"/>
    </location>
</feature>
<feature type="sequence conflict" description="In Ref. 2; AAC23602." evidence="8" ref="2">
    <original>M</original>
    <variation>V</variation>
    <location>
        <position position="392"/>
    </location>
</feature>
<feature type="sequence conflict" description="In Ref. 2; AAC23602." evidence="8" ref="2">
    <original>S</original>
    <variation>C</variation>
    <location>
        <position position="418"/>
    </location>
</feature>
<feature type="sequence conflict" description="In Ref. 2; AAC23602." evidence="8" ref="2">
    <original>E</original>
    <variation>G</variation>
    <location>
        <position position="446"/>
    </location>
</feature>
<feature type="sequence conflict" description="In Ref. 2; AAC23602." evidence="8" ref="2">
    <original>G</original>
    <variation>GGG</variation>
    <location>
        <position position="498"/>
    </location>
</feature>
<evidence type="ECO:0000250" key="1">
    <source>
        <dbReference type="UniProtKB" id="P25123"/>
    </source>
</evidence>
<evidence type="ECO:0000250" key="2">
    <source>
        <dbReference type="UniProtKB" id="P58154"/>
    </source>
</evidence>
<evidence type="ECO:0000255" key="3"/>
<evidence type="ECO:0000256" key="4">
    <source>
        <dbReference type="SAM" id="MobiDB-lite"/>
    </source>
</evidence>
<evidence type="ECO:0000269" key="5">
    <source>
    </source>
</evidence>
<evidence type="ECO:0000269" key="6">
    <source ref="2"/>
</evidence>
<evidence type="ECO:0000303" key="7">
    <source>
    </source>
</evidence>
<evidence type="ECO:0000305" key="8"/>
<evidence type="ECO:0000312" key="9">
    <source>
        <dbReference type="EMBL" id="AAC23602.1"/>
    </source>
</evidence>
<evidence type="ECO:0000312" key="10">
    <source>
        <dbReference type="EMBL" id="BAD16658.2"/>
    </source>
</evidence>
<accession>Q75NA5</accession>
<accession>O76472</accession>
<keyword id="KW-1003">Cell membrane</keyword>
<keyword id="KW-0868">Chloride</keyword>
<keyword id="KW-0869">Chloride channel</keyword>
<keyword id="KW-1015">Disulfide bond</keyword>
<keyword id="KW-0325">Glycoprotein</keyword>
<keyword id="KW-0407">Ion channel</keyword>
<keyword id="KW-0406">Ion transport</keyword>
<keyword id="KW-1071">Ligand-gated ion channel</keyword>
<keyword id="KW-0472">Membrane</keyword>
<keyword id="KW-0628">Postsynaptic cell membrane</keyword>
<keyword id="KW-0675">Receptor</keyword>
<keyword id="KW-1185">Reference proteome</keyword>
<keyword id="KW-0732">Signal</keyword>
<keyword id="KW-0770">Synapse</keyword>
<keyword id="KW-0812">Transmembrane</keyword>
<keyword id="KW-1133">Transmembrane helix</keyword>
<keyword id="KW-0813">Transport</keyword>
<organism>
    <name type="scientific">Musca domestica</name>
    <name type="common">House fly</name>
    <dbReference type="NCBI Taxonomy" id="7370"/>
    <lineage>
        <taxon>Eukaryota</taxon>
        <taxon>Metazoa</taxon>
        <taxon>Ecdysozoa</taxon>
        <taxon>Arthropoda</taxon>
        <taxon>Hexapoda</taxon>
        <taxon>Insecta</taxon>
        <taxon>Pterygota</taxon>
        <taxon>Neoptera</taxon>
        <taxon>Endopterygota</taxon>
        <taxon>Diptera</taxon>
        <taxon>Brachycera</taxon>
        <taxon>Muscomorpha</taxon>
        <taxon>Muscoidea</taxon>
        <taxon>Muscidae</taxon>
        <taxon>Musca</taxon>
    </lineage>
</organism>
<gene>
    <name evidence="7 9" type="primary">Rdl</name>
</gene>
<protein>
    <recommendedName>
        <fullName>Gamma-aminobutyric acid receptor subunit beta</fullName>
    </recommendedName>
    <alternativeName>
        <fullName>GABA(A) receptor subunit beta</fullName>
    </alternativeName>
    <alternativeName>
        <fullName>MdRdl</fullName>
    </alternativeName>
</protein>
<dbReference type="EMBL" id="AB177547">
    <property type="protein sequence ID" value="BAD16658.2"/>
    <property type="molecule type" value="mRNA"/>
</dbReference>
<dbReference type="EMBL" id="AF070935">
    <property type="protein sequence ID" value="AAC23602.1"/>
    <property type="molecule type" value="mRNA"/>
</dbReference>
<dbReference type="RefSeq" id="NP_001292048.1">
    <property type="nucleotide sequence ID" value="NM_001305119.1"/>
</dbReference>
<dbReference type="SMR" id="Q75NA5"/>
<dbReference type="STRING" id="7370.Q75NA5"/>
<dbReference type="BindingDB" id="Q75NA5"/>
<dbReference type="ChEMBL" id="CHEMBL3986"/>
<dbReference type="DrugCentral" id="Q75NA5"/>
<dbReference type="GlyCosmos" id="Q75NA5">
    <property type="glycosylation" value="2 sites, No reported glycans"/>
</dbReference>
<dbReference type="GeneID" id="101900690"/>
<dbReference type="KEGG" id="mde:101900690"/>
<dbReference type="CTD" id="39054"/>
<dbReference type="VEuPathDB" id="VectorBase:MDOA001163"/>
<dbReference type="VEuPathDB" id="VectorBase:MDOMA2_018943"/>
<dbReference type="eggNOG" id="KOG3643">
    <property type="taxonomic scope" value="Eukaryota"/>
</dbReference>
<dbReference type="OrthoDB" id="8890589at2759"/>
<dbReference type="Proteomes" id="UP000694905">
    <property type="component" value="Unplaced"/>
</dbReference>
<dbReference type="GO" id="GO:0034707">
    <property type="term" value="C:chloride channel complex"/>
    <property type="evidence" value="ECO:0007669"/>
    <property type="project" value="UniProtKB-KW"/>
</dbReference>
<dbReference type="GO" id="GO:0045211">
    <property type="term" value="C:postsynaptic membrane"/>
    <property type="evidence" value="ECO:0007669"/>
    <property type="project" value="UniProtKB-SubCell"/>
</dbReference>
<dbReference type="GO" id="GO:0030672">
    <property type="term" value="C:synaptic vesicle membrane"/>
    <property type="evidence" value="ECO:0000250"/>
    <property type="project" value="UniProtKB"/>
</dbReference>
<dbReference type="GO" id="GO:0008503">
    <property type="term" value="F:benzodiazepine receptor activity"/>
    <property type="evidence" value="ECO:0000250"/>
    <property type="project" value="UniProtKB"/>
</dbReference>
<dbReference type="GO" id="GO:0005254">
    <property type="term" value="F:chloride channel activity"/>
    <property type="evidence" value="ECO:0007669"/>
    <property type="project" value="UniProtKB-KW"/>
</dbReference>
<dbReference type="GO" id="GO:0005230">
    <property type="term" value="F:extracellular ligand-gated monoatomic ion channel activity"/>
    <property type="evidence" value="ECO:0007669"/>
    <property type="project" value="InterPro"/>
</dbReference>
<dbReference type="GO" id="GO:0004890">
    <property type="term" value="F:GABA-A receptor activity"/>
    <property type="evidence" value="ECO:0007669"/>
    <property type="project" value="InterPro"/>
</dbReference>
<dbReference type="GO" id="GO:0099095">
    <property type="term" value="F:ligand-gated monoatomic anion channel activity"/>
    <property type="evidence" value="ECO:0007669"/>
    <property type="project" value="UniProtKB-ARBA"/>
</dbReference>
<dbReference type="GO" id="GO:0007214">
    <property type="term" value="P:gamma-aminobutyric acid signaling pathway"/>
    <property type="evidence" value="ECO:0000250"/>
    <property type="project" value="UniProtKB"/>
</dbReference>
<dbReference type="CDD" id="cd19008">
    <property type="entry name" value="LGIC_ECD_GABAR_RDL-like"/>
    <property type="match status" value="1"/>
</dbReference>
<dbReference type="CDD" id="cd19049">
    <property type="entry name" value="LGIC_TM_anion"/>
    <property type="match status" value="1"/>
</dbReference>
<dbReference type="FunFam" id="2.70.170.10:FF:000021">
    <property type="entry name" value="Gamma-aminobutyric acid receptor isoform 3b"/>
    <property type="match status" value="1"/>
</dbReference>
<dbReference type="FunFam" id="1.20.58.390:FF:000033">
    <property type="entry name" value="Gamma-aminobutyric acid receptor subunit beta"/>
    <property type="match status" value="1"/>
</dbReference>
<dbReference type="FunFam" id="1.20.58.390:FF:000047">
    <property type="entry name" value="Resistance to dieldrin, isoform H"/>
    <property type="match status" value="1"/>
</dbReference>
<dbReference type="Gene3D" id="2.70.170.10">
    <property type="entry name" value="Neurotransmitter-gated ion-channel ligand-binding domain"/>
    <property type="match status" value="1"/>
</dbReference>
<dbReference type="Gene3D" id="1.20.58.390">
    <property type="entry name" value="Neurotransmitter-gated ion-channel transmembrane domain"/>
    <property type="match status" value="2"/>
</dbReference>
<dbReference type="InterPro" id="IPR006028">
    <property type="entry name" value="GABAA/Glycine_rcpt"/>
</dbReference>
<dbReference type="InterPro" id="IPR002289">
    <property type="entry name" value="GABAAb_rcpt"/>
</dbReference>
<dbReference type="InterPro" id="IPR006202">
    <property type="entry name" value="Neur_chan_lig-bd"/>
</dbReference>
<dbReference type="InterPro" id="IPR036734">
    <property type="entry name" value="Neur_chan_lig-bd_sf"/>
</dbReference>
<dbReference type="InterPro" id="IPR006201">
    <property type="entry name" value="Neur_channel"/>
</dbReference>
<dbReference type="InterPro" id="IPR036719">
    <property type="entry name" value="Neuro-gated_channel_TM_sf"/>
</dbReference>
<dbReference type="InterPro" id="IPR038050">
    <property type="entry name" value="Neuro_actylchol_rec"/>
</dbReference>
<dbReference type="InterPro" id="IPR006029">
    <property type="entry name" value="Neurotrans-gated_channel_TM"/>
</dbReference>
<dbReference type="InterPro" id="IPR018000">
    <property type="entry name" value="Neurotransmitter_ion_chnl_CS"/>
</dbReference>
<dbReference type="NCBIfam" id="TIGR00860">
    <property type="entry name" value="LIC"/>
    <property type="match status" value="1"/>
</dbReference>
<dbReference type="PANTHER" id="PTHR18945">
    <property type="entry name" value="NEUROTRANSMITTER GATED ION CHANNEL"/>
    <property type="match status" value="1"/>
</dbReference>
<dbReference type="Pfam" id="PF02931">
    <property type="entry name" value="Neur_chan_LBD"/>
    <property type="match status" value="1"/>
</dbReference>
<dbReference type="Pfam" id="PF02932">
    <property type="entry name" value="Neur_chan_memb"/>
    <property type="match status" value="1"/>
</dbReference>
<dbReference type="PRINTS" id="PR01160">
    <property type="entry name" value="GABAARBETA"/>
</dbReference>
<dbReference type="PRINTS" id="PR00253">
    <property type="entry name" value="GABAARECEPTR"/>
</dbReference>
<dbReference type="PRINTS" id="PR00252">
    <property type="entry name" value="NRIONCHANNEL"/>
</dbReference>
<dbReference type="SUPFAM" id="SSF90112">
    <property type="entry name" value="Neurotransmitter-gated ion-channel transmembrane pore"/>
    <property type="match status" value="1"/>
</dbReference>
<dbReference type="SUPFAM" id="SSF63712">
    <property type="entry name" value="Nicotinic receptor ligand binding domain-like"/>
    <property type="match status" value="1"/>
</dbReference>
<dbReference type="PROSITE" id="PS00236">
    <property type="entry name" value="NEUROTR_ION_CHANNEL"/>
    <property type="match status" value="1"/>
</dbReference>
<reference evidence="8 10" key="1">
    <citation type="journal article" date="2006" name="Insect Mol. Biol.">
        <title>Functional characterization of Musca glutamate- and GABA-gated chloride channels expressed independently and coexpressed in Xenopus oocytes.</title>
        <authorList>
            <person name="Eguchi Y."/>
            <person name="Ihara M."/>
            <person name="Ochi E."/>
            <person name="Shibata Y."/>
            <person name="Matsuda K."/>
            <person name="Fushiki S."/>
            <person name="Sugama H."/>
            <person name="Hamasaki Y."/>
            <person name="Niwa H."/>
            <person name="Wada M."/>
            <person name="Ozoe F."/>
            <person name="Ozoe Y."/>
        </authorList>
    </citation>
    <scope>NUCLEOTIDE SEQUENCE [MRNA]</scope>
    <scope>FUNCTION</scope>
    <scope>SUBUNIT</scope>
    <source>
        <strain evidence="5">WHO/SRS</strain>
        <tissue evidence="10">Head</tissue>
    </source>
</reference>
<reference evidence="8 9" key="2">
    <citation type="submission" date="1998-06" db="EMBL/GenBank/DDBJ databases">
        <title>Molecular evolution of Rdl in insects.</title>
        <authorList>
            <person name="Glueck S.B."/>
            <person name="Hook-d'Innocenzo L.E."/>
            <person name="MacIntyre R.J."/>
        </authorList>
    </citation>
    <scope>NUCLEOTIDE SEQUENCE [MRNA] OF 107-558</scope>
</reference>
<sequence length="576" mass="63638">MSDSMLYQTLQTCLPKSRLITLWLAFTLAMLIQEPRRHAATVNAATAGGSMLGDVNISAILDSFSVSYDKRVRPNYGGPPVEVGVTMYVLSISSLSEVKMDFTLDFYFRQFWTDPRLAYRKRPGVETLSVGSEFIKNIWVPDTFFVNEKQSYFHIATTSNEFIRVHHSGSITRSIRLTITASCPMNLQYFPMDRQLCHIEIESFGYTMRDIRYKWNEGPNSVGVSSEVSLPQFKVLGHRQRAVEISLTTGNYSRLACEIQFVRSMGYYLIQIYIPSGLIVVISWVSFWLNRNATPARVALGVTTVLTMTTLMSSTNAALPKISYVKSIDVYLGTCFVMVFASLLEYATVGYMAKRIQMRKQRFMTIQKMAEQKKQQQLDGVQPPPNPNPNTMVDHGGHGHGHGHHSHGHPHVPKQTVSNRPIGFQTMQQQNIGGRGCSIVGPLFQEVRFKVHDPKAHSKGGTLENTVNGGRGGPPVGPHGPGPQGPPGGPPAGGGGGGAPPEGGDAEAAVPAHLLHPGKVKKDINKLLGITPSDIDKYSRIVFPVCFVCFNLMYWIIYLHVSDVVADDLVLLGEEK</sequence>
<proteinExistence type="evidence at protein level"/>